<name>ICOS_BOVIN</name>
<protein>
    <recommendedName>
        <fullName>Inducible T-cell costimulator</fullName>
    </recommendedName>
    <cdAntigenName>CD278</cdAntigenName>
</protein>
<proteinExistence type="evidence at transcript level"/>
<organism>
    <name type="scientific">Bos taurus</name>
    <name type="common">Bovine</name>
    <dbReference type="NCBI Taxonomy" id="9913"/>
    <lineage>
        <taxon>Eukaryota</taxon>
        <taxon>Metazoa</taxon>
        <taxon>Chordata</taxon>
        <taxon>Craniata</taxon>
        <taxon>Vertebrata</taxon>
        <taxon>Euteleostomi</taxon>
        <taxon>Mammalia</taxon>
        <taxon>Eutheria</taxon>
        <taxon>Laurasiatheria</taxon>
        <taxon>Artiodactyla</taxon>
        <taxon>Ruminantia</taxon>
        <taxon>Pecora</taxon>
        <taxon>Bovidae</taxon>
        <taxon>Bovinae</taxon>
        <taxon>Bos</taxon>
    </lineage>
</organism>
<gene>
    <name type="primary">ICOS</name>
</gene>
<feature type="signal peptide" evidence="3">
    <location>
        <begin position="1"/>
        <end position="19"/>
    </location>
</feature>
<feature type="chain" id="PRO_0000227499" description="Inducible T-cell costimulator">
    <location>
        <begin position="20"/>
        <end position="209"/>
    </location>
</feature>
<feature type="topological domain" description="Extracellular" evidence="3">
    <location>
        <begin position="20"/>
        <end position="141"/>
    </location>
</feature>
<feature type="transmembrane region" description="Helical" evidence="3">
    <location>
        <begin position="142"/>
        <end position="162"/>
    </location>
</feature>
<feature type="domain" description="Ig-like V-type">
    <location>
        <begin position="30"/>
        <end position="133"/>
    </location>
</feature>
<feature type="glycosylation site" description="N-linked (GlcNAc...) asparagine" evidence="3">
    <location>
        <position position="23"/>
    </location>
</feature>
<feature type="glycosylation site" description="N-linked (GlcNAc...) asparagine" evidence="2">
    <location>
        <position position="89"/>
    </location>
</feature>
<feature type="disulfide bond" evidence="2">
    <location>
        <begin position="42"/>
        <end position="109"/>
    </location>
</feature>
<feature type="disulfide bond" evidence="2">
    <location>
        <begin position="63"/>
        <end position="83"/>
    </location>
</feature>
<keyword id="KW-1003">Cell membrane</keyword>
<keyword id="KW-1015">Disulfide bond</keyword>
<keyword id="KW-0325">Glycoprotein</keyword>
<keyword id="KW-0393">Immunoglobulin domain</keyword>
<keyword id="KW-0472">Membrane</keyword>
<keyword id="KW-1185">Reference proteome</keyword>
<keyword id="KW-0732">Signal</keyword>
<keyword id="KW-0812">Transmembrane</keyword>
<keyword id="KW-1133">Transmembrane helix</keyword>
<evidence type="ECO:0000250" key="1">
    <source>
        <dbReference type="UniProtKB" id="Q9WVS0"/>
    </source>
</evidence>
<evidence type="ECO:0000250" key="2">
    <source>
        <dbReference type="UniProtKB" id="Q9Y6W8"/>
    </source>
</evidence>
<evidence type="ECO:0000255" key="3"/>
<reference key="1">
    <citation type="journal article" date="2005" name="BMC Genomics">
        <title>Characterization of 954 bovine full-CDS cDNA sequences.</title>
        <authorList>
            <person name="Harhay G.P."/>
            <person name="Sonstegard T.S."/>
            <person name="Keele J.W."/>
            <person name="Heaton M.P."/>
            <person name="Clawson M.L."/>
            <person name="Snelling W.M."/>
            <person name="Wiedmann R.T."/>
            <person name="Van Tassell C.P."/>
            <person name="Smith T.P.L."/>
        </authorList>
    </citation>
    <scope>NUCLEOTIDE SEQUENCE [LARGE SCALE MRNA]</scope>
</reference>
<sequence>MKSDLRYFFLFCIQVEILAGEFNDSAASEMFIFHNGGVQILCKYPDTVRQFKMQLLKGDNVLCDLTKTKENEDTVSIRNLNVCKFQLSNNSVSFFLYNLDSSYASYYICKLSIFDPPPFQVDILSREYLNIYESELCCQLKFWLPIGCAAFVTVCVFGCVLMYWLTKKKYPTSVHDPNSEYMFMAAVNTAKKPAPTDVTRNLELPGTQA</sequence>
<accession>Q58DF9</accession>
<comment type="function">
    <text evidence="1 2">Stimulatory receptor expressed in activated or antigen-experienced T-cells that plays an important role in the immune response. Upon binding to its ligand ICOSL expressed on antigen presenting cells (APCs), delivers costimulatory signals that enhances all basic T-cell responses to a foreign antigen, namely proliferation, secretion of lymphokines including IL10, up-regulation of molecules that mediate cell-cell interaction, and effective help for antibody secretion by B-cells. Also acts as a costimulatory receptor critical for the differentiation of T follicular regulatory cells upon immune challenges such as viral infection (By similarity). Mechanistically, potentiates TCR-induced calcium flux by augmenting PLCG1 activation and actin remodeling (By similarity). In addition, activates PI3K signaling pathways independently of calcium flux (By similarity). Essential both for efficient interaction between T and B-cells and for normal antibody responses to T-cell dependent antigens. Prevents the apoptosis of pre-activated T-cells. Plays a critical role in CD40-mediated class switching of immunoglobin isotypes (By similarity).</text>
</comment>
<comment type="subunit">
    <text evidence="2">Homodimer; disulfide-linked. Interacts with ICOSLG. Interacts with PIK3R1. Interacts with TBK1; this interaction is critical for the maturation of T follicular regulatory cells.</text>
</comment>
<comment type="subcellular location">
    <subcellularLocation>
        <location evidence="2">Cell membrane</location>
        <topology evidence="2">Single-pass type I membrane protein</topology>
    </subcellularLocation>
</comment>
<comment type="PTM">
    <text evidence="2">N-glycosylated.</text>
</comment>
<dbReference type="EMBL" id="BT021638">
    <property type="protein sequence ID" value="AAX46485.1"/>
    <property type="molecule type" value="mRNA"/>
</dbReference>
<dbReference type="RefSeq" id="NP_001029447.1">
    <property type="nucleotide sequence ID" value="NM_001034275.1"/>
</dbReference>
<dbReference type="SMR" id="Q58DF9"/>
<dbReference type="FunCoup" id="Q58DF9">
    <property type="interactions" value="193"/>
</dbReference>
<dbReference type="STRING" id="9913.ENSBTAP00000028775"/>
<dbReference type="GlyCosmos" id="Q58DF9">
    <property type="glycosylation" value="2 sites, No reported glycans"/>
</dbReference>
<dbReference type="GlyGen" id="Q58DF9">
    <property type="glycosylation" value="2 sites"/>
</dbReference>
<dbReference type="PaxDb" id="9913-ENSBTAP00000028775"/>
<dbReference type="GeneID" id="507026"/>
<dbReference type="KEGG" id="bta:507026"/>
<dbReference type="CTD" id="29851"/>
<dbReference type="VEuPathDB" id="HostDB:ENSBTAG00000021596"/>
<dbReference type="eggNOG" id="ENOG502S59F">
    <property type="taxonomic scope" value="Eukaryota"/>
</dbReference>
<dbReference type="HOGENOM" id="CLU_1315009_0_0_1"/>
<dbReference type="InParanoid" id="Q58DF9"/>
<dbReference type="OMA" id="QDKEDCF"/>
<dbReference type="OrthoDB" id="9403189at2759"/>
<dbReference type="TreeFam" id="TF335679"/>
<dbReference type="Reactome" id="R-BTA-1257604">
    <property type="pathway name" value="PIP3 activates AKT signaling"/>
</dbReference>
<dbReference type="Reactome" id="R-BTA-6811558">
    <property type="pathway name" value="PI5P, PP2A and IER3 Regulate PI3K/AKT Signaling"/>
</dbReference>
<dbReference type="Reactome" id="R-BTA-9927354">
    <property type="pathway name" value="Co-stimulation by ICOS"/>
</dbReference>
<dbReference type="Proteomes" id="UP000009136">
    <property type="component" value="Chromosome 2"/>
</dbReference>
<dbReference type="Bgee" id="ENSBTAG00000021596">
    <property type="expression patterns" value="Expressed in mesenteric lymph node and 66 other cell types or tissues"/>
</dbReference>
<dbReference type="GO" id="GO:0005886">
    <property type="term" value="C:plasma membrane"/>
    <property type="evidence" value="ECO:0007669"/>
    <property type="project" value="UniProtKB-SubCell"/>
</dbReference>
<dbReference type="GO" id="GO:0038023">
    <property type="term" value="F:signaling receptor activity"/>
    <property type="evidence" value="ECO:0007669"/>
    <property type="project" value="Ensembl"/>
</dbReference>
<dbReference type="GO" id="GO:0098609">
    <property type="term" value="P:cell-cell adhesion"/>
    <property type="evidence" value="ECO:0000318"/>
    <property type="project" value="GO_Central"/>
</dbReference>
<dbReference type="GO" id="GO:0031295">
    <property type="term" value="P:T cell costimulation"/>
    <property type="evidence" value="ECO:0000318"/>
    <property type="project" value="GO_Central"/>
</dbReference>
<dbReference type="GO" id="GO:0002517">
    <property type="term" value="P:T cell tolerance induction"/>
    <property type="evidence" value="ECO:0000318"/>
    <property type="project" value="GO_Central"/>
</dbReference>
<dbReference type="GO" id="GO:0061470">
    <property type="term" value="P:T follicular helper cell differentiation"/>
    <property type="evidence" value="ECO:0007669"/>
    <property type="project" value="Ensembl"/>
</dbReference>
<dbReference type="FunFam" id="2.60.40.10:FF:000874">
    <property type="entry name" value="Inducible T-cell costimulator"/>
    <property type="match status" value="1"/>
</dbReference>
<dbReference type="Gene3D" id="2.60.40.10">
    <property type="entry name" value="Immunoglobulins"/>
    <property type="match status" value="1"/>
</dbReference>
<dbReference type="InterPro" id="IPR039943">
    <property type="entry name" value="ICOS"/>
</dbReference>
<dbReference type="InterPro" id="IPR013783">
    <property type="entry name" value="Ig-like_fold"/>
</dbReference>
<dbReference type="InterPro" id="IPR013106">
    <property type="entry name" value="Ig_V-set"/>
</dbReference>
<dbReference type="PANTHER" id="PTHR20904:SF0">
    <property type="entry name" value="INDUCIBLE T-CELL COSTIMULATOR"/>
    <property type="match status" value="1"/>
</dbReference>
<dbReference type="PANTHER" id="PTHR20904">
    <property type="entry name" value="INDUCIBLE T-CELL COSTIMULATOR ICOS"/>
    <property type="match status" value="1"/>
</dbReference>
<dbReference type="Pfam" id="PF15910">
    <property type="entry name" value="V-set_2"/>
    <property type="match status" value="1"/>
</dbReference>